<feature type="chain" id="PRO_1000072245" description="Large ribosomal subunit protein bL19">
    <location>
        <begin position="1"/>
        <end position="117"/>
    </location>
</feature>
<name>RL19_HALHL</name>
<accession>A1WUF2</accession>
<reference key="1">
    <citation type="submission" date="2006-12" db="EMBL/GenBank/DDBJ databases">
        <title>Complete sequence of Halorhodospira halophila SL1.</title>
        <authorList>
            <consortium name="US DOE Joint Genome Institute"/>
            <person name="Copeland A."/>
            <person name="Lucas S."/>
            <person name="Lapidus A."/>
            <person name="Barry K."/>
            <person name="Detter J.C."/>
            <person name="Glavina del Rio T."/>
            <person name="Hammon N."/>
            <person name="Israni S."/>
            <person name="Dalin E."/>
            <person name="Tice H."/>
            <person name="Pitluck S."/>
            <person name="Saunders E."/>
            <person name="Brettin T."/>
            <person name="Bruce D."/>
            <person name="Han C."/>
            <person name="Tapia R."/>
            <person name="Schmutz J."/>
            <person name="Larimer F."/>
            <person name="Land M."/>
            <person name="Hauser L."/>
            <person name="Kyrpides N."/>
            <person name="Mikhailova N."/>
            <person name="Hoff W."/>
            <person name="Richardson P."/>
        </authorList>
    </citation>
    <scope>NUCLEOTIDE SEQUENCE [LARGE SCALE GENOMIC DNA]</scope>
    <source>
        <strain>DSM 244 / SL1</strain>
    </source>
</reference>
<gene>
    <name evidence="1" type="primary">rplS</name>
    <name type="ordered locus">Hhal_0527</name>
</gene>
<protein>
    <recommendedName>
        <fullName evidence="1">Large ribosomal subunit protein bL19</fullName>
    </recommendedName>
    <alternativeName>
        <fullName evidence="2">50S ribosomal protein L19</fullName>
    </alternativeName>
</protein>
<dbReference type="EMBL" id="CP000544">
    <property type="protein sequence ID" value="ABM61314.1"/>
    <property type="molecule type" value="Genomic_DNA"/>
</dbReference>
<dbReference type="RefSeq" id="WP_011813337.1">
    <property type="nucleotide sequence ID" value="NC_008789.1"/>
</dbReference>
<dbReference type="SMR" id="A1WUF2"/>
<dbReference type="STRING" id="349124.Hhal_0527"/>
<dbReference type="KEGG" id="hha:Hhal_0527"/>
<dbReference type="eggNOG" id="COG0335">
    <property type="taxonomic scope" value="Bacteria"/>
</dbReference>
<dbReference type="HOGENOM" id="CLU_103507_1_0_6"/>
<dbReference type="OrthoDB" id="9803541at2"/>
<dbReference type="Proteomes" id="UP000000647">
    <property type="component" value="Chromosome"/>
</dbReference>
<dbReference type="GO" id="GO:0022625">
    <property type="term" value="C:cytosolic large ribosomal subunit"/>
    <property type="evidence" value="ECO:0007669"/>
    <property type="project" value="TreeGrafter"/>
</dbReference>
<dbReference type="GO" id="GO:0003735">
    <property type="term" value="F:structural constituent of ribosome"/>
    <property type="evidence" value="ECO:0007669"/>
    <property type="project" value="InterPro"/>
</dbReference>
<dbReference type="GO" id="GO:0006412">
    <property type="term" value="P:translation"/>
    <property type="evidence" value="ECO:0007669"/>
    <property type="project" value="UniProtKB-UniRule"/>
</dbReference>
<dbReference type="FunFam" id="2.30.30.790:FF:000001">
    <property type="entry name" value="50S ribosomal protein L19"/>
    <property type="match status" value="1"/>
</dbReference>
<dbReference type="Gene3D" id="2.30.30.790">
    <property type="match status" value="1"/>
</dbReference>
<dbReference type="HAMAP" id="MF_00402">
    <property type="entry name" value="Ribosomal_bL19"/>
    <property type="match status" value="1"/>
</dbReference>
<dbReference type="InterPro" id="IPR001857">
    <property type="entry name" value="Ribosomal_bL19"/>
</dbReference>
<dbReference type="InterPro" id="IPR038657">
    <property type="entry name" value="Ribosomal_bL19_sf"/>
</dbReference>
<dbReference type="InterPro" id="IPR008991">
    <property type="entry name" value="Translation_prot_SH3-like_sf"/>
</dbReference>
<dbReference type="NCBIfam" id="TIGR01024">
    <property type="entry name" value="rplS_bact"/>
    <property type="match status" value="1"/>
</dbReference>
<dbReference type="PANTHER" id="PTHR15680:SF9">
    <property type="entry name" value="LARGE RIBOSOMAL SUBUNIT PROTEIN BL19M"/>
    <property type="match status" value="1"/>
</dbReference>
<dbReference type="PANTHER" id="PTHR15680">
    <property type="entry name" value="RIBOSOMAL PROTEIN L19"/>
    <property type="match status" value="1"/>
</dbReference>
<dbReference type="Pfam" id="PF01245">
    <property type="entry name" value="Ribosomal_L19"/>
    <property type="match status" value="1"/>
</dbReference>
<dbReference type="PIRSF" id="PIRSF002191">
    <property type="entry name" value="Ribosomal_L19"/>
    <property type="match status" value="1"/>
</dbReference>
<dbReference type="PRINTS" id="PR00061">
    <property type="entry name" value="RIBOSOMALL19"/>
</dbReference>
<dbReference type="SUPFAM" id="SSF50104">
    <property type="entry name" value="Translation proteins SH3-like domain"/>
    <property type="match status" value="1"/>
</dbReference>
<keyword id="KW-1185">Reference proteome</keyword>
<keyword id="KW-0687">Ribonucleoprotein</keyword>
<keyword id="KW-0689">Ribosomal protein</keyword>
<comment type="function">
    <text evidence="1">This protein is located at the 30S-50S ribosomal subunit interface and may play a role in the structure and function of the aminoacyl-tRNA binding site.</text>
</comment>
<comment type="similarity">
    <text evidence="1">Belongs to the bacterial ribosomal protein bL19 family.</text>
</comment>
<organism>
    <name type="scientific">Halorhodospira halophila (strain DSM 244 / SL1)</name>
    <name type="common">Ectothiorhodospira halophila (strain DSM 244 / SL1)</name>
    <dbReference type="NCBI Taxonomy" id="349124"/>
    <lineage>
        <taxon>Bacteria</taxon>
        <taxon>Pseudomonadati</taxon>
        <taxon>Pseudomonadota</taxon>
        <taxon>Gammaproteobacteria</taxon>
        <taxon>Chromatiales</taxon>
        <taxon>Ectothiorhodospiraceae</taxon>
        <taxon>Halorhodospira</taxon>
    </lineage>
</organism>
<sequence length="117" mass="13471">MNVIDELEREQIETCKHTVPEFAPGDTVLVQVWVREGGRERVQPFEGVVIAKRKRGLNSSFTLRKTSHGEGVERVFQTYSPQIESIKVKRRGDVRQAKLYHLRELSGKAARIKEKIN</sequence>
<evidence type="ECO:0000255" key="1">
    <source>
        <dbReference type="HAMAP-Rule" id="MF_00402"/>
    </source>
</evidence>
<evidence type="ECO:0000305" key="2"/>
<proteinExistence type="inferred from homology"/>